<protein>
    <recommendedName>
        <fullName evidence="1">Probable triosephosphate isomerase 2</fullName>
        <shortName evidence="1">TIM 2</shortName>
        <shortName evidence="1">TPI 2</shortName>
        <ecNumber evidence="1">5.3.1.1</ecNumber>
    </recommendedName>
    <alternativeName>
        <fullName evidence="1">Triose-phosphate isomerase 2</fullName>
    </alternativeName>
</protein>
<accession>Q8YA20</accession>
<name>TPIS2_LISMO</name>
<sequence length="254" mass="27918">MRKPLVGINMKNYINTRAQTSEWLEATIPLLGNFSDVDTFIFPSMGTLETTANLLAGTSFGFGPQNMAPEKSGPLTGEFSVESIIDLSANYVEIGHAERKNLFHEKTSEIAKKIQLALDEKITPVVCVGEGIRANDTNELKNALKKQIEALFDTIQVTQFKNVVLAYEPEWAIGKANSADTDYIESAHQALREIIRELGGDETLVRIIYGGSVSKENAAEIVRQKNVDGLFVGRFGHKPQNFADIVSIVSKTKG</sequence>
<proteinExistence type="inferred from homology"/>
<reference key="1">
    <citation type="journal article" date="2001" name="Science">
        <title>Comparative genomics of Listeria species.</title>
        <authorList>
            <person name="Glaser P."/>
            <person name="Frangeul L."/>
            <person name="Buchrieser C."/>
            <person name="Rusniok C."/>
            <person name="Amend A."/>
            <person name="Baquero F."/>
            <person name="Berche P."/>
            <person name="Bloecker H."/>
            <person name="Brandt P."/>
            <person name="Chakraborty T."/>
            <person name="Charbit A."/>
            <person name="Chetouani F."/>
            <person name="Couve E."/>
            <person name="de Daruvar A."/>
            <person name="Dehoux P."/>
            <person name="Domann E."/>
            <person name="Dominguez-Bernal G."/>
            <person name="Duchaud E."/>
            <person name="Durant L."/>
            <person name="Dussurget O."/>
            <person name="Entian K.-D."/>
            <person name="Fsihi H."/>
            <person name="Garcia-del Portillo F."/>
            <person name="Garrido P."/>
            <person name="Gautier L."/>
            <person name="Goebel W."/>
            <person name="Gomez-Lopez N."/>
            <person name="Hain T."/>
            <person name="Hauf J."/>
            <person name="Jackson D."/>
            <person name="Jones L.-M."/>
            <person name="Kaerst U."/>
            <person name="Kreft J."/>
            <person name="Kuhn M."/>
            <person name="Kunst F."/>
            <person name="Kurapkat G."/>
            <person name="Madueno E."/>
            <person name="Maitournam A."/>
            <person name="Mata Vicente J."/>
            <person name="Ng E."/>
            <person name="Nedjari H."/>
            <person name="Nordsiek G."/>
            <person name="Novella S."/>
            <person name="de Pablos B."/>
            <person name="Perez-Diaz J.-C."/>
            <person name="Purcell R."/>
            <person name="Remmel B."/>
            <person name="Rose M."/>
            <person name="Schlueter T."/>
            <person name="Simoes N."/>
            <person name="Tierrez A."/>
            <person name="Vazquez-Boland J.-A."/>
            <person name="Voss H."/>
            <person name="Wehland J."/>
            <person name="Cossart P."/>
        </authorList>
    </citation>
    <scope>NUCLEOTIDE SEQUENCE [LARGE SCALE GENOMIC DNA]</scope>
    <source>
        <strain>ATCC BAA-679 / EGD-e</strain>
    </source>
</reference>
<evidence type="ECO:0000250" key="1">
    <source>
        <dbReference type="UniProtKB" id="P9WG43"/>
    </source>
</evidence>
<evidence type="ECO:0000305" key="2"/>
<organism>
    <name type="scientific">Listeria monocytogenes serovar 1/2a (strain ATCC BAA-679 / EGD-e)</name>
    <dbReference type="NCBI Taxonomy" id="169963"/>
    <lineage>
        <taxon>Bacteria</taxon>
        <taxon>Bacillati</taxon>
        <taxon>Bacillota</taxon>
        <taxon>Bacilli</taxon>
        <taxon>Bacillales</taxon>
        <taxon>Listeriaceae</taxon>
        <taxon>Listeria</taxon>
    </lineage>
</organism>
<dbReference type="EC" id="5.3.1.1" evidence="1"/>
<dbReference type="EMBL" id="AL591975">
    <property type="protein sequence ID" value="CAC98425.1"/>
    <property type="molecule type" value="Genomic_DNA"/>
</dbReference>
<dbReference type="PIR" id="AC1118">
    <property type="entry name" value="AC1118"/>
</dbReference>
<dbReference type="RefSeq" id="NP_463876.1">
    <property type="nucleotide sequence ID" value="NC_003210.1"/>
</dbReference>
<dbReference type="RefSeq" id="WP_010989434.1">
    <property type="nucleotide sequence ID" value="NZ_CP149495.1"/>
</dbReference>
<dbReference type="SMR" id="Q8YA20"/>
<dbReference type="STRING" id="169963.gene:17592997"/>
<dbReference type="PaxDb" id="169963-lmo0346"/>
<dbReference type="EnsemblBacteria" id="CAC98425">
    <property type="protein sequence ID" value="CAC98425"/>
    <property type="gene ID" value="CAC98425"/>
</dbReference>
<dbReference type="GeneID" id="987587"/>
<dbReference type="KEGG" id="lmo:lmo0346"/>
<dbReference type="PATRIC" id="fig|169963.11.peg.356"/>
<dbReference type="eggNOG" id="COG0149">
    <property type="taxonomic scope" value="Bacteria"/>
</dbReference>
<dbReference type="HOGENOM" id="CLU_024251_2_3_9"/>
<dbReference type="OrthoDB" id="9809429at2"/>
<dbReference type="PhylomeDB" id="Q8YA20"/>
<dbReference type="BioCyc" id="LMON169963:LMO0346-MONOMER"/>
<dbReference type="UniPathway" id="UPA00109">
    <property type="reaction ID" value="UER00189"/>
</dbReference>
<dbReference type="UniPathway" id="UPA00138"/>
<dbReference type="Proteomes" id="UP000000817">
    <property type="component" value="Chromosome"/>
</dbReference>
<dbReference type="GO" id="GO:0005829">
    <property type="term" value="C:cytosol"/>
    <property type="evidence" value="ECO:0000318"/>
    <property type="project" value="GO_Central"/>
</dbReference>
<dbReference type="GO" id="GO:0004807">
    <property type="term" value="F:triose-phosphate isomerase activity"/>
    <property type="evidence" value="ECO:0000318"/>
    <property type="project" value="GO_Central"/>
</dbReference>
<dbReference type="GO" id="GO:0006094">
    <property type="term" value="P:gluconeogenesis"/>
    <property type="evidence" value="ECO:0000318"/>
    <property type="project" value="GO_Central"/>
</dbReference>
<dbReference type="GO" id="GO:0046166">
    <property type="term" value="P:glyceraldehyde-3-phosphate biosynthetic process"/>
    <property type="evidence" value="ECO:0000318"/>
    <property type="project" value="GO_Central"/>
</dbReference>
<dbReference type="GO" id="GO:0019563">
    <property type="term" value="P:glycerol catabolic process"/>
    <property type="evidence" value="ECO:0000318"/>
    <property type="project" value="GO_Central"/>
</dbReference>
<dbReference type="GO" id="GO:0006096">
    <property type="term" value="P:glycolytic process"/>
    <property type="evidence" value="ECO:0000318"/>
    <property type="project" value="GO_Central"/>
</dbReference>
<dbReference type="CDD" id="cd00311">
    <property type="entry name" value="TIM"/>
    <property type="match status" value="1"/>
</dbReference>
<dbReference type="Gene3D" id="3.20.20.70">
    <property type="entry name" value="Aldolase class I"/>
    <property type="match status" value="1"/>
</dbReference>
<dbReference type="InterPro" id="IPR013785">
    <property type="entry name" value="Aldolase_TIM"/>
</dbReference>
<dbReference type="InterPro" id="IPR035990">
    <property type="entry name" value="TIM_sf"/>
</dbReference>
<dbReference type="InterPro" id="IPR000652">
    <property type="entry name" value="Triosephosphate_isomerase"/>
</dbReference>
<dbReference type="InterPro" id="IPR020861">
    <property type="entry name" value="Triosephosphate_isomerase_AS"/>
</dbReference>
<dbReference type="PANTHER" id="PTHR21139">
    <property type="entry name" value="TRIOSEPHOSPHATE ISOMERASE"/>
    <property type="match status" value="1"/>
</dbReference>
<dbReference type="PANTHER" id="PTHR21139:SF42">
    <property type="entry name" value="TRIOSEPHOSPHATE ISOMERASE"/>
    <property type="match status" value="1"/>
</dbReference>
<dbReference type="Pfam" id="PF00121">
    <property type="entry name" value="TIM"/>
    <property type="match status" value="1"/>
</dbReference>
<dbReference type="SUPFAM" id="SSF51351">
    <property type="entry name" value="Triosephosphate isomerase (TIM)"/>
    <property type="match status" value="1"/>
</dbReference>
<dbReference type="PROSITE" id="PS00171">
    <property type="entry name" value="TIM_1"/>
    <property type="match status" value="1"/>
</dbReference>
<dbReference type="PROSITE" id="PS51440">
    <property type="entry name" value="TIM_2"/>
    <property type="match status" value="1"/>
</dbReference>
<feature type="chain" id="PRO_0000090243" description="Probable triosephosphate isomerase 2">
    <location>
        <begin position="1"/>
        <end position="254"/>
    </location>
</feature>
<feature type="active site" description="Electrophile" evidence="1">
    <location>
        <position position="96"/>
    </location>
</feature>
<feature type="active site" description="Proton acceptor" evidence="1">
    <location>
        <position position="168"/>
    </location>
</feature>
<feature type="binding site" evidence="1">
    <location>
        <begin position="9"/>
        <end position="11"/>
    </location>
    <ligand>
        <name>substrate</name>
    </ligand>
</feature>
<feature type="binding site" evidence="1">
    <location>
        <position position="174"/>
    </location>
    <ligand>
        <name>substrate</name>
    </ligand>
</feature>
<feature type="binding site" evidence="1">
    <location>
        <position position="212"/>
    </location>
    <ligand>
        <name>substrate</name>
    </ligand>
</feature>
<comment type="function">
    <text evidence="1">Involved in the gluconeogenesis. Catalyzes stereospecifically the conversion of dihydroxyacetone phosphate (DHAP) to D-glyceraldehyde-3-phosphate (G3P).</text>
</comment>
<comment type="catalytic activity">
    <reaction evidence="1">
        <text>D-glyceraldehyde 3-phosphate = dihydroxyacetone phosphate</text>
        <dbReference type="Rhea" id="RHEA:18585"/>
        <dbReference type="ChEBI" id="CHEBI:57642"/>
        <dbReference type="ChEBI" id="CHEBI:59776"/>
        <dbReference type="EC" id="5.3.1.1"/>
    </reaction>
</comment>
<comment type="pathway">
    <text evidence="1">Carbohydrate biosynthesis; gluconeogenesis.</text>
</comment>
<comment type="pathway">
    <text evidence="1">Carbohydrate degradation; glycolysis; D-glyceraldehyde 3-phosphate from glycerone phosphate: step 1/1.</text>
</comment>
<comment type="subunit">
    <text evidence="1">Homodimer.</text>
</comment>
<comment type="subcellular location">
    <subcellularLocation>
        <location evidence="1">Cytoplasm</location>
    </subcellularLocation>
</comment>
<comment type="similarity">
    <text evidence="2">Belongs to the triosephosphate isomerase family.</text>
</comment>
<keyword id="KW-0963">Cytoplasm</keyword>
<keyword id="KW-0312">Gluconeogenesis</keyword>
<keyword id="KW-0324">Glycolysis</keyword>
<keyword id="KW-0413">Isomerase</keyword>
<keyword id="KW-1185">Reference proteome</keyword>
<gene>
    <name evidence="1" type="primary">tpiA2</name>
    <name type="ordered locus">lmo0346</name>
</gene>